<protein>
    <recommendedName>
        <fullName evidence="1">Small ribosomal subunit protein bS6</fullName>
    </recommendedName>
    <alternativeName>
        <fullName evidence="2">30S ribosomal protein S6</fullName>
    </alternativeName>
</protein>
<comment type="function">
    <text evidence="1">Binds together with bS18 to 16S ribosomal RNA.</text>
</comment>
<comment type="similarity">
    <text evidence="1">Belongs to the bacterial ribosomal protein bS6 family.</text>
</comment>
<gene>
    <name evidence="1" type="primary">rpsF</name>
    <name evidence="1" type="synonym">rps6</name>
    <name type="ordered locus">Ava_2072</name>
</gene>
<sequence length="108" mass="12557">MSTVYETLYILRPDLTDEQVELAIAKYQNLLQEQGATDIEVQNRGKRRLAYEIKKQRDGFYVQFNYNAPGKAIAILERAMRLSEEVIRYLTVKQEVTKEKEDKVAVTA</sequence>
<organism>
    <name type="scientific">Trichormus variabilis (strain ATCC 29413 / PCC 7937)</name>
    <name type="common">Anabaena variabilis</name>
    <dbReference type="NCBI Taxonomy" id="240292"/>
    <lineage>
        <taxon>Bacteria</taxon>
        <taxon>Bacillati</taxon>
        <taxon>Cyanobacteriota</taxon>
        <taxon>Cyanophyceae</taxon>
        <taxon>Nostocales</taxon>
        <taxon>Nostocaceae</taxon>
        <taxon>Trichormus</taxon>
    </lineage>
</organism>
<accession>Q3MBE2</accession>
<keyword id="KW-0687">Ribonucleoprotein</keyword>
<keyword id="KW-0689">Ribosomal protein</keyword>
<keyword id="KW-0694">RNA-binding</keyword>
<keyword id="KW-0699">rRNA-binding</keyword>
<proteinExistence type="inferred from homology"/>
<evidence type="ECO:0000255" key="1">
    <source>
        <dbReference type="HAMAP-Rule" id="MF_00360"/>
    </source>
</evidence>
<evidence type="ECO:0000305" key="2"/>
<name>RS6_TRIV2</name>
<feature type="chain" id="PRO_0000229520" description="Small ribosomal subunit protein bS6">
    <location>
        <begin position="1"/>
        <end position="108"/>
    </location>
</feature>
<reference key="1">
    <citation type="journal article" date="2014" name="Stand. Genomic Sci.">
        <title>Complete genome sequence of Anabaena variabilis ATCC 29413.</title>
        <authorList>
            <person name="Thiel T."/>
            <person name="Pratte B.S."/>
            <person name="Zhong J."/>
            <person name="Goodwin L."/>
            <person name="Copeland A."/>
            <person name="Lucas S."/>
            <person name="Han C."/>
            <person name="Pitluck S."/>
            <person name="Land M.L."/>
            <person name="Kyrpides N.C."/>
            <person name="Woyke T."/>
        </authorList>
    </citation>
    <scope>NUCLEOTIDE SEQUENCE [LARGE SCALE GENOMIC DNA]</scope>
    <source>
        <strain>ATCC 29413 / PCC 7937</strain>
    </source>
</reference>
<dbReference type="EMBL" id="CP000117">
    <property type="protein sequence ID" value="ABA21694.1"/>
    <property type="molecule type" value="Genomic_DNA"/>
</dbReference>
<dbReference type="SMR" id="Q3MBE2"/>
<dbReference type="STRING" id="240292.Ava_2072"/>
<dbReference type="KEGG" id="ava:Ava_2072"/>
<dbReference type="eggNOG" id="COG0360">
    <property type="taxonomic scope" value="Bacteria"/>
</dbReference>
<dbReference type="HOGENOM" id="CLU_113441_5_2_3"/>
<dbReference type="Proteomes" id="UP000002533">
    <property type="component" value="Chromosome"/>
</dbReference>
<dbReference type="GO" id="GO:0005737">
    <property type="term" value="C:cytoplasm"/>
    <property type="evidence" value="ECO:0007669"/>
    <property type="project" value="UniProtKB-ARBA"/>
</dbReference>
<dbReference type="GO" id="GO:1990904">
    <property type="term" value="C:ribonucleoprotein complex"/>
    <property type="evidence" value="ECO:0007669"/>
    <property type="project" value="UniProtKB-KW"/>
</dbReference>
<dbReference type="GO" id="GO:0005840">
    <property type="term" value="C:ribosome"/>
    <property type="evidence" value="ECO:0007669"/>
    <property type="project" value="UniProtKB-KW"/>
</dbReference>
<dbReference type="GO" id="GO:0070181">
    <property type="term" value="F:small ribosomal subunit rRNA binding"/>
    <property type="evidence" value="ECO:0007669"/>
    <property type="project" value="TreeGrafter"/>
</dbReference>
<dbReference type="GO" id="GO:0003735">
    <property type="term" value="F:structural constituent of ribosome"/>
    <property type="evidence" value="ECO:0007669"/>
    <property type="project" value="InterPro"/>
</dbReference>
<dbReference type="GO" id="GO:0006412">
    <property type="term" value="P:translation"/>
    <property type="evidence" value="ECO:0007669"/>
    <property type="project" value="UniProtKB-UniRule"/>
</dbReference>
<dbReference type="CDD" id="cd15487">
    <property type="entry name" value="bS6_chloro_cyano"/>
    <property type="match status" value="1"/>
</dbReference>
<dbReference type="Gene3D" id="3.30.70.60">
    <property type="match status" value="1"/>
</dbReference>
<dbReference type="HAMAP" id="MF_00360">
    <property type="entry name" value="Ribosomal_bS6"/>
    <property type="match status" value="1"/>
</dbReference>
<dbReference type="InterPro" id="IPR000529">
    <property type="entry name" value="Ribosomal_bS6"/>
</dbReference>
<dbReference type="InterPro" id="IPR020815">
    <property type="entry name" value="Ribosomal_bS6_CS"/>
</dbReference>
<dbReference type="InterPro" id="IPR035980">
    <property type="entry name" value="Ribosomal_bS6_sf"/>
</dbReference>
<dbReference type="InterPro" id="IPR020814">
    <property type="entry name" value="Ribosomal_S6_plastid/chlpt"/>
</dbReference>
<dbReference type="InterPro" id="IPR014717">
    <property type="entry name" value="Transl_elong_EF1B/ribsomal_bS6"/>
</dbReference>
<dbReference type="NCBIfam" id="TIGR00166">
    <property type="entry name" value="S6"/>
    <property type="match status" value="1"/>
</dbReference>
<dbReference type="PANTHER" id="PTHR21011">
    <property type="entry name" value="MITOCHONDRIAL 28S RIBOSOMAL PROTEIN S6"/>
    <property type="match status" value="1"/>
</dbReference>
<dbReference type="PANTHER" id="PTHR21011:SF1">
    <property type="entry name" value="SMALL RIBOSOMAL SUBUNIT PROTEIN BS6M"/>
    <property type="match status" value="1"/>
</dbReference>
<dbReference type="Pfam" id="PF01250">
    <property type="entry name" value="Ribosomal_S6"/>
    <property type="match status" value="1"/>
</dbReference>
<dbReference type="SUPFAM" id="SSF54995">
    <property type="entry name" value="Ribosomal protein S6"/>
    <property type="match status" value="1"/>
</dbReference>
<dbReference type="PROSITE" id="PS01048">
    <property type="entry name" value="RIBOSOMAL_S6"/>
    <property type="match status" value="1"/>
</dbReference>